<feature type="chain" id="PRO_0000132580" description="Small ribosomal subunit protein uS4c">
    <location>
        <begin position="1"/>
        <end position="207"/>
    </location>
</feature>
<feature type="domain" description="S4 RNA-binding">
    <location>
        <begin position="92"/>
        <end position="156"/>
    </location>
</feature>
<keyword id="KW-0150">Chloroplast</keyword>
<keyword id="KW-0934">Plastid</keyword>
<keyword id="KW-0687">Ribonucleoprotein</keyword>
<keyword id="KW-0689">Ribosomal protein</keyword>
<keyword id="KW-0694">RNA-binding</keyword>
<keyword id="KW-0699">rRNA-binding</keyword>
<dbReference type="EMBL" id="AJ583686">
    <property type="protein sequence ID" value="CAE47540.1"/>
    <property type="molecule type" value="Genomic_DNA"/>
</dbReference>
<dbReference type="RefSeq" id="YP_011094511.1">
    <property type="nucleotide sequence ID" value="NC_088039.1"/>
</dbReference>
<dbReference type="SMR" id="Q6H9K7"/>
<dbReference type="GeneID" id="89446609"/>
<dbReference type="GO" id="GO:0009507">
    <property type="term" value="C:chloroplast"/>
    <property type="evidence" value="ECO:0007669"/>
    <property type="project" value="UniProtKB-SubCell"/>
</dbReference>
<dbReference type="GO" id="GO:0015935">
    <property type="term" value="C:small ribosomal subunit"/>
    <property type="evidence" value="ECO:0007669"/>
    <property type="project" value="InterPro"/>
</dbReference>
<dbReference type="GO" id="GO:0019843">
    <property type="term" value="F:rRNA binding"/>
    <property type="evidence" value="ECO:0007669"/>
    <property type="project" value="UniProtKB-UniRule"/>
</dbReference>
<dbReference type="GO" id="GO:0003735">
    <property type="term" value="F:structural constituent of ribosome"/>
    <property type="evidence" value="ECO:0007669"/>
    <property type="project" value="InterPro"/>
</dbReference>
<dbReference type="GO" id="GO:0042274">
    <property type="term" value="P:ribosomal small subunit biogenesis"/>
    <property type="evidence" value="ECO:0007669"/>
    <property type="project" value="TreeGrafter"/>
</dbReference>
<dbReference type="GO" id="GO:0006412">
    <property type="term" value="P:translation"/>
    <property type="evidence" value="ECO:0007669"/>
    <property type="project" value="UniProtKB-UniRule"/>
</dbReference>
<dbReference type="CDD" id="cd00165">
    <property type="entry name" value="S4"/>
    <property type="match status" value="1"/>
</dbReference>
<dbReference type="FunFam" id="3.10.290.10:FF:000001">
    <property type="entry name" value="30S ribosomal protein S4"/>
    <property type="match status" value="1"/>
</dbReference>
<dbReference type="FunFam" id="1.10.1050.10:FF:000002">
    <property type="entry name" value="30S ribosomal protein S4, chloroplastic"/>
    <property type="match status" value="1"/>
</dbReference>
<dbReference type="Gene3D" id="1.10.1050.10">
    <property type="entry name" value="Ribosomal Protein S4 Delta 41, Chain A, domain 1"/>
    <property type="match status" value="1"/>
</dbReference>
<dbReference type="Gene3D" id="3.10.290.10">
    <property type="entry name" value="RNA-binding S4 domain"/>
    <property type="match status" value="1"/>
</dbReference>
<dbReference type="HAMAP" id="MF_01306_B">
    <property type="entry name" value="Ribosomal_uS4_B"/>
    <property type="match status" value="1"/>
</dbReference>
<dbReference type="InterPro" id="IPR022801">
    <property type="entry name" value="Ribosomal_uS4"/>
</dbReference>
<dbReference type="InterPro" id="IPR005709">
    <property type="entry name" value="Ribosomal_uS4_bac-type"/>
</dbReference>
<dbReference type="InterPro" id="IPR018079">
    <property type="entry name" value="Ribosomal_uS4_CS"/>
</dbReference>
<dbReference type="InterPro" id="IPR001912">
    <property type="entry name" value="Ribosomal_uS4_N"/>
</dbReference>
<dbReference type="InterPro" id="IPR002942">
    <property type="entry name" value="S4_RNA-bd"/>
</dbReference>
<dbReference type="InterPro" id="IPR036986">
    <property type="entry name" value="S4_RNA-bd_sf"/>
</dbReference>
<dbReference type="NCBIfam" id="NF003717">
    <property type="entry name" value="PRK05327.1"/>
    <property type="match status" value="1"/>
</dbReference>
<dbReference type="NCBIfam" id="TIGR01017">
    <property type="entry name" value="rpsD_bact"/>
    <property type="match status" value="1"/>
</dbReference>
<dbReference type="PANTHER" id="PTHR11831">
    <property type="entry name" value="30S 40S RIBOSOMAL PROTEIN"/>
    <property type="match status" value="1"/>
</dbReference>
<dbReference type="PANTHER" id="PTHR11831:SF4">
    <property type="entry name" value="SMALL RIBOSOMAL SUBUNIT PROTEIN US4M"/>
    <property type="match status" value="1"/>
</dbReference>
<dbReference type="Pfam" id="PF00163">
    <property type="entry name" value="Ribosomal_S4"/>
    <property type="match status" value="1"/>
</dbReference>
<dbReference type="Pfam" id="PF01479">
    <property type="entry name" value="S4"/>
    <property type="match status" value="1"/>
</dbReference>
<dbReference type="SMART" id="SM01390">
    <property type="entry name" value="Ribosomal_S4"/>
    <property type="match status" value="1"/>
</dbReference>
<dbReference type="SMART" id="SM00363">
    <property type="entry name" value="S4"/>
    <property type="match status" value="1"/>
</dbReference>
<dbReference type="SUPFAM" id="SSF55174">
    <property type="entry name" value="Alpha-L RNA-binding motif"/>
    <property type="match status" value="1"/>
</dbReference>
<dbReference type="PROSITE" id="PS00632">
    <property type="entry name" value="RIBOSOMAL_S4"/>
    <property type="match status" value="1"/>
</dbReference>
<dbReference type="PROSITE" id="PS50889">
    <property type="entry name" value="S4"/>
    <property type="match status" value="1"/>
</dbReference>
<sequence>MSRYRGPRLRIIRRLRNLPGLTNKLVESKKNQVSGSDQSNQKKVSQYCIRLEAKQRLRFNYGLTERQLLNYVRIARCAKGSTGQILLQLLEMRLDNILFRLGVVPTIPSARQLINHRHILVNNRIVDIPSFHCKPKDIITIGAPKTYQSIITKRIESFAKDQIPDHLTLSLSEPKKPKGFVNYLINRESIGLKINELLVVEYYSRKA</sequence>
<organism>
    <name type="scientific">Equisetum pratense</name>
    <name type="common">Meadow horsetail</name>
    <dbReference type="NCBI Taxonomy" id="231681"/>
    <lineage>
        <taxon>Eukaryota</taxon>
        <taxon>Viridiplantae</taxon>
        <taxon>Streptophyta</taxon>
        <taxon>Embryophyta</taxon>
        <taxon>Tracheophyta</taxon>
        <taxon>Polypodiopsida</taxon>
        <taxon>Equisetidae</taxon>
        <taxon>Equisetales</taxon>
        <taxon>Equisetaceae</taxon>
        <taxon>Equisetum</taxon>
    </lineage>
</organism>
<gene>
    <name type="primary">rps4</name>
</gene>
<reference key="1">
    <citation type="journal article" date="2004" name="Syst. Bot.">
        <title>Phylogeny of horsetails (Equisetum) based on the chloroplast rps4 gene and adjacent noncoding sequences.</title>
        <authorList>
            <person name="Guillon J.-M."/>
        </authorList>
        <dbReference type="AGRICOLA" id="IND43653535"/>
    </citation>
    <scope>NUCLEOTIDE SEQUENCE [GENOMIC DNA]</scope>
</reference>
<proteinExistence type="inferred from homology"/>
<geneLocation type="chloroplast"/>
<protein>
    <recommendedName>
        <fullName evidence="2">Small ribosomal subunit protein uS4c</fullName>
    </recommendedName>
    <alternativeName>
        <fullName>30S ribosomal protein S4, chloroplastic</fullName>
    </alternativeName>
</protein>
<accession>Q6H9K7</accession>
<name>RR4_EQUPT</name>
<comment type="function">
    <text evidence="1">One of the primary rRNA binding proteins, it binds directly to 16S rRNA where it nucleates assembly of the body of the 30S subunit.</text>
</comment>
<comment type="function">
    <text evidence="1">With S5 and S12 plays an important role in translational accuracy.</text>
</comment>
<comment type="subunit">
    <text evidence="1">Part of the 30S ribosomal subunit. Contacts protein S5. The interaction surface between S4 and S5 is involved in control of translational fidelity (By similarity).</text>
</comment>
<comment type="subcellular location">
    <subcellularLocation>
        <location>Plastid</location>
        <location>Chloroplast</location>
    </subcellularLocation>
</comment>
<comment type="similarity">
    <text evidence="2">Belongs to the universal ribosomal protein uS4 family.</text>
</comment>
<evidence type="ECO:0000250" key="1"/>
<evidence type="ECO:0000305" key="2"/>